<comment type="function">
    <text>Resolvase catalyzes the resolution (a site-specific recombination) of the cointegrated replicon to yield the final transposition products.</text>
</comment>
<comment type="similarity">
    <text evidence="3">Belongs to the site-specific recombinase resolvase family.</text>
</comment>
<protein>
    <recommendedName>
        <fullName>Transposons Tn4653 resolvase</fullName>
    </recommendedName>
</protein>
<dbReference type="EMBL" id="D90148">
    <property type="protein sequence ID" value="BAA14177.1"/>
    <property type="molecule type" value="Genomic_DNA"/>
</dbReference>
<dbReference type="PIR" id="B32806">
    <property type="entry name" value="B32806"/>
</dbReference>
<dbReference type="RefSeq" id="NP_542905.1">
    <property type="nucleotide sequence ID" value="NC_003350.1"/>
</dbReference>
<dbReference type="RefSeq" id="WP_001161490.1">
    <property type="nucleotide sequence ID" value="NZ_LT852425.1"/>
</dbReference>
<dbReference type="SMR" id="P0C1G3"/>
<dbReference type="GO" id="GO:0003677">
    <property type="term" value="F:DNA binding"/>
    <property type="evidence" value="ECO:0007669"/>
    <property type="project" value="UniProtKB-KW"/>
</dbReference>
<dbReference type="GO" id="GO:0000150">
    <property type="term" value="F:DNA strand exchange activity"/>
    <property type="evidence" value="ECO:0007669"/>
    <property type="project" value="InterPro"/>
</dbReference>
<dbReference type="GO" id="GO:0015074">
    <property type="term" value="P:DNA integration"/>
    <property type="evidence" value="ECO:0007669"/>
    <property type="project" value="UniProtKB-KW"/>
</dbReference>
<dbReference type="CDD" id="cd00569">
    <property type="entry name" value="HTH_Hin_like"/>
    <property type="match status" value="1"/>
</dbReference>
<dbReference type="CDD" id="cd03768">
    <property type="entry name" value="SR_ResInv"/>
    <property type="match status" value="1"/>
</dbReference>
<dbReference type="Gene3D" id="1.10.10.60">
    <property type="entry name" value="Homeodomain-like"/>
    <property type="match status" value="1"/>
</dbReference>
<dbReference type="Gene3D" id="3.40.50.1390">
    <property type="entry name" value="Resolvase, N-terminal catalytic domain"/>
    <property type="match status" value="1"/>
</dbReference>
<dbReference type="InterPro" id="IPR009057">
    <property type="entry name" value="Homeodomain-like_sf"/>
</dbReference>
<dbReference type="InterPro" id="IPR006118">
    <property type="entry name" value="Recombinase_CS"/>
</dbReference>
<dbReference type="InterPro" id="IPR006119">
    <property type="entry name" value="Resolv_N"/>
</dbReference>
<dbReference type="InterPro" id="IPR036162">
    <property type="entry name" value="Resolvase-like_N_sf"/>
</dbReference>
<dbReference type="InterPro" id="IPR006120">
    <property type="entry name" value="Resolvase_HTH_dom"/>
</dbReference>
<dbReference type="InterPro" id="IPR050639">
    <property type="entry name" value="SSR_resolvase"/>
</dbReference>
<dbReference type="PANTHER" id="PTHR30461">
    <property type="entry name" value="DNA-INVERTASE FROM LAMBDOID PROPHAGE"/>
    <property type="match status" value="1"/>
</dbReference>
<dbReference type="PANTHER" id="PTHR30461:SF26">
    <property type="entry name" value="RESOLVASE HOMOLOG YNEB"/>
    <property type="match status" value="1"/>
</dbReference>
<dbReference type="Pfam" id="PF02796">
    <property type="entry name" value="HTH_7"/>
    <property type="match status" value="1"/>
</dbReference>
<dbReference type="Pfam" id="PF00239">
    <property type="entry name" value="Resolvase"/>
    <property type="match status" value="1"/>
</dbReference>
<dbReference type="SMART" id="SM00857">
    <property type="entry name" value="Resolvase"/>
    <property type="match status" value="1"/>
</dbReference>
<dbReference type="SUPFAM" id="SSF46689">
    <property type="entry name" value="Homeodomain-like"/>
    <property type="match status" value="1"/>
</dbReference>
<dbReference type="SUPFAM" id="SSF53041">
    <property type="entry name" value="Resolvase-like"/>
    <property type="match status" value="1"/>
</dbReference>
<dbReference type="PROSITE" id="PS00397">
    <property type="entry name" value="RECOMBINASES_1"/>
    <property type="match status" value="1"/>
</dbReference>
<dbReference type="PROSITE" id="PS00398">
    <property type="entry name" value="RECOMBINASES_2"/>
    <property type="match status" value="1"/>
</dbReference>
<dbReference type="PROSITE" id="PS51736">
    <property type="entry name" value="RECOMBINASES_3"/>
    <property type="match status" value="1"/>
</dbReference>
<gene>
    <name type="primary">tnpR</name>
</gene>
<feature type="chain" id="PRO_0000240013" description="Transposons Tn4653 resolvase">
    <location>
        <begin position="1"/>
        <end position="186"/>
    </location>
</feature>
<feature type="domain" description="Resolvase/invertase-type recombinase catalytic" evidence="2">
    <location>
        <begin position="4"/>
        <end position="137"/>
    </location>
</feature>
<feature type="DNA-binding region" description="H-T-H motif" evidence="1">
    <location>
        <begin position="164"/>
        <end position="183"/>
    </location>
</feature>
<feature type="active site" description="O-(5'-phospho-DNA)-serine intermediate" evidence="2">
    <location>
        <position position="12"/>
    </location>
</feature>
<keyword id="KW-0229">DNA integration</keyword>
<keyword id="KW-0233">DNA recombination</keyword>
<keyword id="KW-0238">DNA-binding</keyword>
<keyword id="KW-0614">Plasmid</keyword>
<keyword id="KW-0814">Transposable element</keyword>
<organism>
    <name type="scientific">Pseudomonas putida</name>
    <name type="common">Arthrobacter siderocapsulatus</name>
    <dbReference type="NCBI Taxonomy" id="303"/>
    <lineage>
        <taxon>Bacteria</taxon>
        <taxon>Pseudomonadati</taxon>
        <taxon>Pseudomonadota</taxon>
        <taxon>Gammaproteobacteria</taxon>
        <taxon>Pseudomonadales</taxon>
        <taxon>Pseudomonadaceae</taxon>
        <taxon>Pseudomonas</taxon>
    </lineage>
</organism>
<geneLocation type="plasmid">
    <name>TOL pWW0</name>
</geneLocation>
<accession>P0C1G3</accession>
<accession>P06692</accession>
<accession>P71417</accession>
<reference key="1">
    <citation type="journal article" date="1989" name="J. Bacteriol.">
        <title>Toluene transposons Tn4651 and Tn4653 are class II transposons.</title>
        <authorList>
            <person name="Tsuda M."/>
            <person name="Minegishi K.I."/>
            <person name="Iino T."/>
        </authorList>
    </citation>
    <scope>NUCLEOTIDE SEQUENCE [GENOMIC DNA]</scope>
    <source>
        <strain>ATCC 33015 / DSM 3931 / JCM 6156 / NCIMB 12182 / mt-2</strain>
        <transposon>Tn4653</transposon>
    </source>
</reference>
<name>TNR7_PSEPU</name>
<evidence type="ECO:0000255" key="1"/>
<evidence type="ECO:0000255" key="2">
    <source>
        <dbReference type="PROSITE-ProRule" id="PRU01072"/>
    </source>
</evidence>
<evidence type="ECO:0000305" key="3"/>
<sequence>MQGHRIGYVRVSSFDQNPERQLEQTQVSKVFTDKASGKDTQRPQLEALLSFVREGDTVVVHSMDRLARNLDDLRRLVQKLTQRGVRIEFLKEGLVFTGEDSPMANLMLSVMGAFAEFERALIRERQREGIALAKQRGAYRGRKKALSDEQAATLRQRATAGEPKAQLAREFNISRETLYQYLRTDD</sequence>
<proteinExistence type="inferred from homology"/>